<protein>
    <recommendedName>
        <fullName>Expansin-B1</fullName>
        <shortName>At-EXPB1</shortName>
        <shortName>AtEXPB1</shortName>
    </recommendedName>
    <alternativeName>
        <fullName>Ath-ExpBeta-1.5</fullName>
    </alternativeName>
    <alternativeName>
        <fullName>Beta-expansin-1</fullName>
    </alternativeName>
</protein>
<organism>
    <name type="scientific">Arabidopsis thaliana</name>
    <name type="common">Mouse-ear cress</name>
    <dbReference type="NCBI Taxonomy" id="3702"/>
    <lineage>
        <taxon>Eukaryota</taxon>
        <taxon>Viridiplantae</taxon>
        <taxon>Streptophyta</taxon>
        <taxon>Embryophyta</taxon>
        <taxon>Tracheophyta</taxon>
        <taxon>Spermatophyta</taxon>
        <taxon>Magnoliopsida</taxon>
        <taxon>eudicotyledons</taxon>
        <taxon>Gunneridae</taxon>
        <taxon>Pentapetalae</taxon>
        <taxon>rosids</taxon>
        <taxon>malvids</taxon>
        <taxon>Brassicales</taxon>
        <taxon>Brassicaceae</taxon>
        <taxon>Camelineae</taxon>
        <taxon>Arabidopsis</taxon>
    </lineage>
</organism>
<reference key="1">
    <citation type="journal article" date="1999" name="Nature">
        <title>Sequence and analysis of chromosome 2 of the plant Arabidopsis thaliana.</title>
        <authorList>
            <person name="Lin X."/>
            <person name="Kaul S."/>
            <person name="Rounsley S.D."/>
            <person name="Shea T.P."/>
            <person name="Benito M.-I."/>
            <person name="Town C.D."/>
            <person name="Fujii C.Y."/>
            <person name="Mason T.M."/>
            <person name="Bowman C.L."/>
            <person name="Barnstead M.E."/>
            <person name="Feldblyum T.V."/>
            <person name="Buell C.R."/>
            <person name="Ketchum K.A."/>
            <person name="Lee J.J."/>
            <person name="Ronning C.M."/>
            <person name="Koo H.L."/>
            <person name="Moffat K.S."/>
            <person name="Cronin L.A."/>
            <person name="Shen M."/>
            <person name="Pai G."/>
            <person name="Van Aken S."/>
            <person name="Umayam L."/>
            <person name="Tallon L.J."/>
            <person name="Gill J.E."/>
            <person name="Adams M.D."/>
            <person name="Carrera A.J."/>
            <person name="Creasy T.H."/>
            <person name="Goodman H.M."/>
            <person name="Somerville C.R."/>
            <person name="Copenhaver G.P."/>
            <person name="Preuss D."/>
            <person name="Nierman W.C."/>
            <person name="White O."/>
            <person name="Eisen J.A."/>
            <person name="Salzberg S.L."/>
            <person name="Fraser C.M."/>
            <person name="Venter J.C."/>
        </authorList>
    </citation>
    <scope>NUCLEOTIDE SEQUENCE [LARGE SCALE GENOMIC DNA]</scope>
    <source>
        <strain>cv. Columbia</strain>
    </source>
</reference>
<reference key="2">
    <citation type="journal article" date="2017" name="Plant J.">
        <title>Araport11: a complete reannotation of the Arabidopsis thaliana reference genome.</title>
        <authorList>
            <person name="Cheng C.Y."/>
            <person name="Krishnakumar V."/>
            <person name="Chan A.P."/>
            <person name="Thibaud-Nissen F."/>
            <person name="Schobel S."/>
            <person name="Town C.D."/>
        </authorList>
    </citation>
    <scope>GENOME REANNOTATION</scope>
    <source>
        <strain>cv. Columbia</strain>
    </source>
</reference>
<reference key="3">
    <citation type="journal article" date="2003" name="Science">
        <title>Empirical analysis of transcriptional activity in the Arabidopsis genome.</title>
        <authorList>
            <person name="Yamada K."/>
            <person name="Lim J."/>
            <person name="Dale J.M."/>
            <person name="Chen H."/>
            <person name="Shinn P."/>
            <person name="Palm C.J."/>
            <person name="Southwick A.M."/>
            <person name="Wu H.C."/>
            <person name="Kim C.J."/>
            <person name="Nguyen M."/>
            <person name="Pham P.K."/>
            <person name="Cheuk R.F."/>
            <person name="Karlin-Newmann G."/>
            <person name="Liu S.X."/>
            <person name="Lam B."/>
            <person name="Sakano H."/>
            <person name="Wu T."/>
            <person name="Yu G."/>
            <person name="Miranda M."/>
            <person name="Quach H.L."/>
            <person name="Tripp M."/>
            <person name="Chang C.H."/>
            <person name="Lee J.M."/>
            <person name="Toriumi M.J."/>
            <person name="Chan M.M."/>
            <person name="Tang C.C."/>
            <person name="Onodera C.S."/>
            <person name="Deng J.M."/>
            <person name="Akiyama K."/>
            <person name="Ansari Y."/>
            <person name="Arakawa T."/>
            <person name="Banh J."/>
            <person name="Banno F."/>
            <person name="Bowser L."/>
            <person name="Brooks S.Y."/>
            <person name="Carninci P."/>
            <person name="Chao Q."/>
            <person name="Choy N."/>
            <person name="Enju A."/>
            <person name="Goldsmith A.D."/>
            <person name="Gurjal M."/>
            <person name="Hansen N.F."/>
            <person name="Hayashizaki Y."/>
            <person name="Johnson-Hopson C."/>
            <person name="Hsuan V.W."/>
            <person name="Iida K."/>
            <person name="Karnes M."/>
            <person name="Khan S."/>
            <person name="Koesema E."/>
            <person name="Ishida J."/>
            <person name="Jiang P.X."/>
            <person name="Jones T."/>
            <person name="Kawai J."/>
            <person name="Kamiya A."/>
            <person name="Meyers C."/>
            <person name="Nakajima M."/>
            <person name="Narusaka M."/>
            <person name="Seki M."/>
            <person name="Sakurai T."/>
            <person name="Satou M."/>
            <person name="Tamse R."/>
            <person name="Vaysberg M."/>
            <person name="Wallender E.K."/>
            <person name="Wong C."/>
            <person name="Yamamura Y."/>
            <person name="Yuan S."/>
            <person name="Shinozaki K."/>
            <person name="Davis R.W."/>
            <person name="Theologis A."/>
            <person name="Ecker J.R."/>
        </authorList>
    </citation>
    <scope>NUCLEOTIDE SEQUENCE [LARGE SCALE MRNA]</scope>
    <source>
        <strain>cv. Columbia</strain>
    </source>
</reference>
<reference key="4">
    <citation type="submission" date="2002-03" db="EMBL/GenBank/DDBJ databases">
        <title>Full-length cDNA from Arabidopsis thaliana.</title>
        <authorList>
            <person name="Brover V.V."/>
            <person name="Troukhan M.E."/>
            <person name="Alexandrov N.A."/>
            <person name="Lu Y.-P."/>
            <person name="Flavell R.B."/>
            <person name="Feldmann K.A."/>
        </authorList>
    </citation>
    <scope>NUCLEOTIDE SEQUENCE [LARGE SCALE MRNA]</scope>
</reference>
<reference key="5">
    <citation type="journal article" date="1995" name="Proc. Natl. Acad. Sci. U.S.A.">
        <title>Molecular cloning and sequence analysis of expansins - a highly conserved, multigene family of proteins that mediate cell wall extension in plants.</title>
        <authorList>
            <person name="Shcherban T.Y."/>
            <person name="Shi J."/>
            <person name="Durachko D.M."/>
            <person name="Guiltinan M.J."/>
            <person name="McQueen-Mason S.J."/>
            <person name="Shieh M."/>
            <person name="Cosgrove D.J."/>
        </authorList>
    </citation>
    <scope>NUCLEOTIDE SEQUENCE [MRNA] OF 13-271</scope>
    <source>
        <strain>cv. Columbia</strain>
    </source>
</reference>
<reference key="6">
    <citation type="journal article" date="1997" name="Proc. Natl. Acad. Sci. U.S.A.">
        <title>Group I allergens of grass pollen as cell wall-loosening agents.</title>
        <authorList>
            <person name="Cosgrove D.J."/>
            <person name="Bedinger P.A."/>
            <person name="Durachko D.M."/>
        </authorList>
    </citation>
    <scope>NUCLEOTIDE SEQUENCE [MRNA] OF 13-271</scope>
    <source>
        <strain>cv. Columbia</strain>
    </source>
</reference>
<reference key="7">
    <citation type="journal article" date="2004" name="Plant Mol. Biol.">
        <title>Nomenclature for members of the expansin superfamily of genes and proteins.</title>
        <authorList>
            <person name="Kende H."/>
            <person name="Bradford K.J."/>
            <person name="Brummell D.A."/>
            <person name="Cho H.-T."/>
            <person name="Cosgrove D.J."/>
            <person name="Fleming A.J."/>
            <person name="Gehring C."/>
            <person name="Lee Y."/>
            <person name="McQueen-Mason S.J."/>
            <person name="Rose J.K.C."/>
            <person name="Voesenek L.A.C."/>
        </authorList>
    </citation>
    <scope>NOMENCLATURE</scope>
</reference>
<name>EXPB1_ARATH</name>
<evidence type="ECO:0000250" key="1"/>
<evidence type="ECO:0000255" key="2"/>
<evidence type="ECO:0000255" key="3">
    <source>
        <dbReference type="PROSITE-ProRule" id="PRU00078"/>
    </source>
</evidence>
<evidence type="ECO:0000255" key="4">
    <source>
        <dbReference type="PROSITE-ProRule" id="PRU00079"/>
    </source>
</evidence>
<evidence type="ECO:0000305" key="5"/>
<keyword id="KW-0134">Cell wall</keyword>
<keyword id="KW-0961">Cell wall biogenesis/degradation</keyword>
<keyword id="KW-1015">Disulfide bond</keyword>
<keyword id="KW-0325">Glycoprotein</keyword>
<keyword id="KW-0472">Membrane</keyword>
<keyword id="KW-1185">Reference proteome</keyword>
<keyword id="KW-0964">Secreted</keyword>
<keyword id="KW-0732">Signal</keyword>
<proteinExistence type="evidence at transcript level"/>
<dbReference type="EMBL" id="AC006234">
    <property type="protein sequence ID" value="AAD20920.1"/>
    <property type="molecule type" value="Genomic_DNA"/>
</dbReference>
<dbReference type="EMBL" id="CP002685">
    <property type="protein sequence ID" value="AEC07066.1"/>
    <property type="molecule type" value="Genomic_DNA"/>
</dbReference>
<dbReference type="EMBL" id="BT003932">
    <property type="protein sequence ID" value="AAO41979.1"/>
    <property type="molecule type" value="mRNA"/>
</dbReference>
<dbReference type="EMBL" id="BT005024">
    <property type="protein sequence ID" value="AAO50557.1"/>
    <property type="molecule type" value="mRNA"/>
</dbReference>
<dbReference type="EMBL" id="AY084478">
    <property type="protein sequence ID" value="AAM61049.1"/>
    <property type="molecule type" value="mRNA"/>
</dbReference>
<dbReference type="EMBL" id="U95967">
    <property type="protein sequence ID" value="AAB61709.1"/>
    <property type="molecule type" value="mRNA"/>
</dbReference>
<dbReference type="PIR" id="H84592">
    <property type="entry name" value="H84592"/>
</dbReference>
<dbReference type="PIR" id="T50657">
    <property type="entry name" value="T50657"/>
</dbReference>
<dbReference type="RefSeq" id="NP_179668.1">
    <property type="nucleotide sequence ID" value="NM_127640.3"/>
</dbReference>
<dbReference type="SMR" id="Q9SKU2"/>
<dbReference type="STRING" id="3702.Q9SKU2"/>
<dbReference type="GlyCosmos" id="Q9SKU2">
    <property type="glycosylation" value="1 site, No reported glycans"/>
</dbReference>
<dbReference type="GlyGen" id="Q9SKU2">
    <property type="glycosylation" value="1 site"/>
</dbReference>
<dbReference type="PaxDb" id="3702-AT2G20750.1"/>
<dbReference type="ProteomicsDB" id="222336"/>
<dbReference type="EnsemblPlants" id="AT2G20750.1">
    <property type="protein sequence ID" value="AT2G20750.1"/>
    <property type="gene ID" value="AT2G20750"/>
</dbReference>
<dbReference type="GeneID" id="816604"/>
<dbReference type="Gramene" id="AT2G20750.1">
    <property type="protein sequence ID" value="AT2G20750.1"/>
    <property type="gene ID" value="AT2G20750"/>
</dbReference>
<dbReference type="KEGG" id="ath:AT2G20750"/>
<dbReference type="Araport" id="AT2G20750"/>
<dbReference type="TAIR" id="AT2G20750">
    <property type="gene designation" value="EXPB1"/>
</dbReference>
<dbReference type="eggNOG" id="ENOG502QPVQ">
    <property type="taxonomic scope" value="Eukaryota"/>
</dbReference>
<dbReference type="HOGENOM" id="CLU_027462_1_2_1"/>
<dbReference type="InParanoid" id="Q9SKU2"/>
<dbReference type="OMA" id="QNIAFHV"/>
<dbReference type="OrthoDB" id="406505at2759"/>
<dbReference type="PhylomeDB" id="Q9SKU2"/>
<dbReference type="PRO" id="PR:Q9SKU2"/>
<dbReference type="Proteomes" id="UP000006548">
    <property type="component" value="Chromosome 2"/>
</dbReference>
<dbReference type="ExpressionAtlas" id="Q9SKU2">
    <property type="expression patterns" value="baseline and differential"/>
</dbReference>
<dbReference type="GO" id="GO:0005576">
    <property type="term" value="C:extracellular region"/>
    <property type="evidence" value="ECO:0007669"/>
    <property type="project" value="UniProtKB-KW"/>
</dbReference>
<dbReference type="GO" id="GO:0016020">
    <property type="term" value="C:membrane"/>
    <property type="evidence" value="ECO:0007669"/>
    <property type="project" value="UniProtKB-SubCell"/>
</dbReference>
<dbReference type="GO" id="GO:0009653">
    <property type="term" value="P:anatomical structure morphogenesis"/>
    <property type="evidence" value="ECO:0007669"/>
    <property type="project" value="UniProtKB-ARBA"/>
</dbReference>
<dbReference type="GO" id="GO:0009828">
    <property type="term" value="P:plant-type cell wall loosening"/>
    <property type="evidence" value="ECO:0000250"/>
    <property type="project" value="UniProtKB"/>
</dbReference>
<dbReference type="GO" id="GO:0019953">
    <property type="term" value="P:sexual reproduction"/>
    <property type="evidence" value="ECO:0007669"/>
    <property type="project" value="InterPro"/>
</dbReference>
<dbReference type="CDD" id="cd22275">
    <property type="entry name" value="DPBB_EXPB_N"/>
    <property type="match status" value="1"/>
</dbReference>
<dbReference type="FunFam" id="2.60.40.760:FF:000002">
    <property type="entry name" value="Beta-expansin 3"/>
    <property type="match status" value="1"/>
</dbReference>
<dbReference type="FunFam" id="2.40.40.10:FF:000004">
    <property type="entry name" value="Expansin B3"/>
    <property type="match status" value="1"/>
</dbReference>
<dbReference type="Gene3D" id="2.60.40.760">
    <property type="entry name" value="Expansin, cellulose-binding-like domain"/>
    <property type="match status" value="1"/>
</dbReference>
<dbReference type="Gene3D" id="2.40.40.10">
    <property type="entry name" value="RlpA-like domain"/>
    <property type="match status" value="1"/>
</dbReference>
<dbReference type="InterPro" id="IPR007118">
    <property type="entry name" value="Expan_Lol_pI"/>
</dbReference>
<dbReference type="InterPro" id="IPR007112">
    <property type="entry name" value="Expansin/allergen_DPBB_dom"/>
</dbReference>
<dbReference type="InterPro" id="IPR007117">
    <property type="entry name" value="Expansin_CBD"/>
</dbReference>
<dbReference type="InterPro" id="IPR036749">
    <property type="entry name" value="Expansin_CBD_sf"/>
</dbReference>
<dbReference type="InterPro" id="IPR005795">
    <property type="entry name" value="LolPI"/>
</dbReference>
<dbReference type="InterPro" id="IPR009009">
    <property type="entry name" value="RlpA-like_DPBB"/>
</dbReference>
<dbReference type="InterPro" id="IPR036908">
    <property type="entry name" value="RlpA-like_sf"/>
</dbReference>
<dbReference type="PANTHER" id="PTHR31692:SF59">
    <property type="entry name" value="EXPANSIN-B1"/>
    <property type="match status" value="1"/>
</dbReference>
<dbReference type="PANTHER" id="PTHR31692">
    <property type="entry name" value="EXPANSIN-B3"/>
    <property type="match status" value="1"/>
</dbReference>
<dbReference type="Pfam" id="PF03330">
    <property type="entry name" value="DPBB_1"/>
    <property type="match status" value="1"/>
</dbReference>
<dbReference type="Pfam" id="PF01357">
    <property type="entry name" value="Expansin_C"/>
    <property type="match status" value="1"/>
</dbReference>
<dbReference type="PRINTS" id="PR01225">
    <property type="entry name" value="EXPANSNFAMLY"/>
</dbReference>
<dbReference type="PRINTS" id="PR00829">
    <property type="entry name" value="LOLP1ALLERGN"/>
</dbReference>
<dbReference type="SMART" id="SM00837">
    <property type="entry name" value="DPBB_1"/>
    <property type="match status" value="1"/>
</dbReference>
<dbReference type="SUPFAM" id="SSF50685">
    <property type="entry name" value="Barwin-like endoglucanases"/>
    <property type="match status" value="1"/>
</dbReference>
<dbReference type="SUPFAM" id="SSF49590">
    <property type="entry name" value="PHL pollen allergen"/>
    <property type="match status" value="1"/>
</dbReference>
<dbReference type="PROSITE" id="PS50843">
    <property type="entry name" value="EXPANSIN_CBD"/>
    <property type="match status" value="1"/>
</dbReference>
<dbReference type="PROSITE" id="PS50842">
    <property type="entry name" value="EXPANSIN_EG45"/>
    <property type="match status" value="1"/>
</dbReference>
<comment type="function">
    <text evidence="1">May cause loosening and extension of plant cell walls by disrupting non-covalent bonding between cellulose microfibrils and matrix glucans. No enzymatic activity has been found (By similarity).</text>
</comment>
<comment type="subcellular location">
    <subcellularLocation>
        <location>Secreted</location>
        <location>Cell wall</location>
    </subcellularLocation>
    <subcellularLocation>
        <location>Membrane</location>
        <topology>Peripheral membrane protein</topology>
    </subcellularLocation>
</comment>
<comment type="similarity">
    <text evidence="5">Belongs to the expansin family. Expansin B subfamily.</text>
</comment>
<comment type="online information" name="EXPANSIN homepage">
    <link uri="https://www.dept.psu.edu/biology/groups/expansins/index.htm"/>
</comment>
<sequence>MQLFPVILPTLCVFLHLLISGSGSTPPLTHSNQQVAATRWLPATATWYGSAEGDGSSGGACGYGSLVDVKPFKARVGAVSPILFKGGEGCGACYKVRCLDKTICSKRAVTIIATDQSPSGPSAKAKHTHFDLSGAAFGHMAIPGHNGVIRNRGLLNILYRRTACKYRGKNIAFHVNAGSTDYWLSLLIEYEDGEGDIGSMHIRQAGSKEWISMKHIWGANWCIVEGPLKGPFSVKLTTLSNNKTLSATDVIPSNWVPKATYTSRLNFSPVL</sequence>
<gene>
    <name type="primary">EXPB1</name>
    <name type="ordered locus">At2g20750</name>
    <name type="ORF">F5H14.28</name>
</gene>
<feature type="signal peptide" evidence="2">
    <location>
        <begin position="1"/>
        <end position="24"/>
    </location>
</feature>
<feature type="chain" id="PRO_0000008707" description="Expansin-B1">
    <location>
        <begin position="25"/>
        <end position="271"/>
    </location>
</feature>
<feature type="domain" description="Expansin-like EG45" evidence="4">
    <location>
        <begin position="58"/>
        <end position="169"/>
    </location>
</feature>
<feature type="domain" description="Expansin-like CBD" evidence="3">
    <location>
        <begin position="182"/>
        <end position="263"/>
    </location>
</feature>
<feature type="glycosylation site" description="N-linked (GlcNAc...) asparagine" evidence="2">
    <location>
        <position position="242"/>
    </location>
</feature>
<feature type="disulfide bond" evidence="4">
    <location>
        <begin position="61"/>
        <end position="90"/>
    </location>
</feature>
<feature type="disulfide bond" evidence="4">
    <location>
        <begin position="93"/>
        <end position="164"/>
    </location>
</feature>
<feature type="disulfide bond" evidence="4">
    <location>
        <begin position="98"/>
        <end position="104"/>
    </location>
</feature>
<accession>Q9SKU2</accession>
<accession>O23688</accession>